<gene>
    <name evidence="1" type="primary">pgi</name>
    <name type="ordered locus">MAP_0891c</name>
</gene>
<accession>Q742E4</accession>
<organism>
    <name type="scientific">Mycolicibacterium paratuberculosis (strain ATCC BAA-968 / K-10)</name>
    <name type="common">Mycobacterium paratuberculosis</name>
    <dbReference type="NCBI Taxonomy" id="262316"/>
    <lineage>
        <taxon>Bacteria</taxon>
        <taxon>Bacillati</taxon>
        <taxon>Actinomycetota</taxon>
        <taxon>Actinomycetes</taxon>
        <taxon>Mycobacteriales</taxon>
        <taxon>Mycobacteriaceae</taxon>
        <taxon>Mycobacterium</taxon>
        <taxon>Mycobacterium avium complex (MAC)</taxon>
    </lineage>
</organism>
<reference key="1">
    <citation type="journal article" date="2005" name="Proc. Natl. Acad. Sci. U.S.A.">
        <title>The complete genome sequence of Mycobacterium avium subspecies paratuberculosis.</title>
        <authorList>
            <person name="Li L."/>
            <person name="Bannantine J.P."/>
            <person name="Zhang Q."/>
            <person name="Amonsin A."/>
            <person name="May B.J."/>
            <person name="Alt D."/>
            <person name="Banerji N."/>
            <person name="Kanjilal S."/>
            <person name="Kapur V."/>
        </authorList>
    </citation>
    <scope>NUCLEOTIDE SEQUENCE [LARGE SCALE GENOMIC DNA]</scope>
    <source>
        <strain>ATCC BAA-968 / K-10</strain>
    </source>
</reference>
<name>G6PI_MYCPA</name>
<dbReference type="EC" id="5.3.1.9" evidence="1"/>
<dbReference type="EMBL" id="AE016958">
    <property type="protein sequence ID" value="AAS03208.1"/>
    <property type="molecule type" value="Genomic_DNA"/>
</dbReference>
<dbReference type="RefSeq" id="WP_003872837.1">
    <property type="nucleotide sequence ID" value="NZ_CP106873.1"/>
</dbReference>
<dbReference type="SMR" id="Q742E4"/>
<dbReference type="STRING" id="262316.MAP_0891c"/>
<dbReference type="GeneID" id="75268870"/>
<dbReference type="KEGG" id="mpa:MAP_0891c"/>
<dbReference type="eggNOG" id="COG0166">
    <property type="taxonomic scope" value="Bacteria"/>
</dbReference>
<dbReference type="HOGENOM" id="CLU_017947_3_1_11"/>
<dbReference type="UniPathway" id="UPA00109">
    <property type="reaction ID" value="UER00181"/>
</dbReference>
<dbReference type="UniPathway" id="UPA00138"/>
<dbReference type="Proteomes" id="UP000000580">
    <property type="component" value="Chromosome"/>
</dbReference>
<dbReference type="GO" id="GO:0005829">
    <property type="term" value="C:cytosol"/>
    <property type="evidence" value="ECO:0007669"/>
    <property type="project" value="TreeGrafter"/>
</dbReference>
<dbReference type="GO" id="GO:0097367">
    <property type="term" value="F:carbohydrate derivative binding"/>
    <property type="evidence" value="ECO:0007669"/>
    <property type="project" value="InterPro"/>
</dbReference>
<dbReference type="GO" id="GO:0004347">
    <property type="term" value="F:glucose-6-phosphate isomerase activity"/>
    <property type="evidence" value="ECO:0007669"/>
    <property type="project" value="UniProtKB-UniRule"/>
</dbReference>
<dbReference type="GO" id="GO:0048029">
    <property type="term" value="F:monosaccharide binding"/>
    <property type="evidence" value="ECO:0007669"/>
    <property type="project" value="TreeGrafter"/>
</dbReference>
<dbReference type="GO" id="GO:0006094">
    <property type="term" value="P:gluconeogenesis"/>
    <property type="evidence" value="ECO:0007669"/>
    <property type="project" value="UniProtKB-UniRule"/>
</dbReference>
<dbReference type="GO" id="GO:0051156">
    <property type="term" value="P:glucose 6-phosphate metabolic process"/>
    <property type="evidence" value="ECO:0007669"/>
    <property type="project" value="TreeGrafter"/>
</dbReference>
<dbReference type="GO" id="GO:0006096">
    <property type="term" value="P:glycolytic process"/>
    <property type="evidence" value="ECO:0007669"/>
    <property type="project" value="UniProtKB-UniRule"/>
</dbReference>
<dbReference type="CDD" id="cd05015">
    <property type="entry name" value="SIS_PGI_1"/>
    <property type="match status" value="1"/>
</dbReference>
<dbReference type="CDD" id="cd05016">
    <property type="entry name" value="SIS_PGI_2"/>
    <property type="match status" value="1"/>
</dbReference>
<dbReference type="FunFam" id="3.40.50.10490:FF:000018">
    <property type="entry name" value="Glucose-6-phosphate isomerase"/>
    <property type="match status" value="1"/>
</dbReference>
<dbReference type="Gene3D" id="1.10.1390.10">
    <property type="match status" value="1"/>
</dbReference>
<dbReference type="Gene3D" id="3.40.50.10490">
    <property type="entry name" value="Glucose-6-phosphate isomerase like protein, domain 1"/>
    <property type="match status" value="2"/>
</dbReference>
<dbReference type="HAMAP" id="MF_00473">
    <property type="entry name" value="G6P_isomerase"/>
    <property type="match status" value="1"/>
</dbReference>
<dbReference type="InterPro" id="IPR001672">
    <property type="entry name" value="G6P_Isomerase"/>
</dbReference>
<dbReference type="InterPro" id="IPR023096">
    <property type="entry name" value="G6P_Isomerase_C"/>
</dbReference>
<dbReference type="InterPro" id="IPR018189">
    <property type="entry name" value="Phosphoglucose_isomerase_CS"/>
</dbReference>
<dbReference type="InterPro" id="IPR046348">
    <property type="entry name" value="SIS_dom_sf"/>
</dbReference>
<dbReference type="InterPro" id="IPR035476">
    <property type="entry name" value="SIS_PGI_1"/>
</dbReference>
<dbReference type="InterPro" id="IPR035482">
    <property type="entry name" value="SIS_PGI_2"/>
</dbReference>
<dbReference type="NCBIfam" id="NF001211">
    <property type="entry name" value="PRK00179.1"/>
    <property type="match status" value="1"/>
</dbReference>
<dbReference type="PANTHER" id="PTHR11469">
    <property type="entry name" value="GLUCOSE-6-PHOSPHATE ISOMERASE"/>
    <property type="match status" value="1"/>
</dbReference>
<dbReference type="PANTHER" id="PTHR11469:SF1">
    <property type="entry name" value="GLUCOSE-6-PHOSPHATE ISOMERASE"/>
    <property type="match status" value="1"/>
</dbReference>
<dbReference type="Pfam" id="PF00342">
    <property type="entry name" value="PGI"/>
    <property type="match status" value="1"/>
</dbReference>
<dbReference type="PRINTS" id="PR00662">
    <property type="entry name" value="G6PISOMERASE"/>
</dbReference>
<dbReference type="SUPFAM" id="SSF53697">
    <property type="entry name" value="SIS domain"/>
    <property type="match status" value="1"/>
</dbReference>
<dbReference type="PROSITE" id="PS00765">
    <property type="entry name" value="P_GLUCOSE_ISOMERASE_1"/>
    <property type="match status" value="1"/>
</dbReference>
<dbReference type="PROSITE" id="PS00174">
    <property type="entry name" value="P_GLUCOSE_ISOMERASE_2"/>
    <property type="match status" value="1"/>
</dbReference>
<dbReference type="PROSITE" id="PS51463">
    <property type="entry name" value="P_GLUCOSE_ISOMERASE_3"/>
    <property type="match status" value="1"/>
</dbReference>
<sequence length="554" mass="60651">MTSVHTLPDITATPAWDALRKHHDRIGDTHLRQFFEEDPDRGRELTVTVGDLYIDYSKHRVTRETLRLLVDLARTAKLEERRDQMFAGVHINTSEDRAVLHTALRLPRDAELIVDGRNVVADVHEVLDAMGEFTDRLRSGEWTGATGKRISTVVNIGIGGSDLGPVMVYQALRHYADAGISARFVSNVDPADLIATLADLDPATTLFIVASKTFSTLETLTNATAARRWITDALGDAAVAHHFVAVSTNKRLVDDFGINTDNMFGFWDWVGGRYSVDSAIGLSVMAVIGREAFADFLSGFHIVDRHFQTAPLESNAPVLLGLIGLWYSNFMGAQSRAVLPYSNDLARFAAYLQQLTMESNGKSTRADGSPVTTDTGEIFWGEPGTNGQHAFYQLLHQGTRLVPADFIGFSQPIDDLPTAEGSGSMHDLLMSNFFAQTQVLAFGKTAEEIAAEGTPADIVPHKVMPGNRPSTSILANRLTPSVLGQLIALYEHQVFTEGVIWGIDSFDQWGVELGKTQAKALLPVITANNSPAPQSDSSTDALVRRYRSERGRTS</sequence>
<feature type="chain" id="PRO_0000180675" description="Glucose-6-phosphate isomerase">
    <location>
        <begin position="1"/>
        <end position="554"/>
    </location>
</feature>
<feature type="region of interest" description="Disordered" evidence="2">
    <location>
        <begin position="527"/>
        <end position="554"/>
    </location>
</feature>
<feature type="compositionally biased region" description="Polar residues" evidence="2">
    <location>
        <begin position="527"/>
        <end position="540"/>
    </location>
</feature>
<feature type="compositionally biased region" description="Basic and acidic residues" evidence="2">
    <location>
        <begin position="542"/>
        <end position="554"/>
    </location>
</feature>
<feature type="active site" description="Proton donor" evidence="1">
    <location>
        <position position="358"/>
    </location>
</feature>
<feature type="active site" evidence="1">
    <location>
        <position position="389"/>
    </location>
</feature>
<feature type="active site" evidence="1">
    <location>
        <position position="515"/>
    </location>
</feature>
<comment type="function">
    <text evidence="1">Catalyzes the reversible isomerization of glucose-6-phosphate to fructose-6-phosphate.</text>
</comment>
<comment type="catalytic activity">
    <reaction evidence="1">
        <text>alpha-D-glucose 6-phosphate = beta-D-fructose 6-phosphate</text>
        <dbReference type="Rhea" id="RHEA:11816"/>
        <dbReference type="ChEBI" id="CHEBI:57634"/>
        <dbReference type="ChEBI" id="CHEBI:58225"/>
        <dbReference type="EC" id="5.3.1.9"/>
    </reaction>
</comment>
<comment type="pathway">
    <text evidence="1">Carbohydrate biosynthesis; gluconeogenesis.</text>
</comment>
<comment type="pathway">
    <text evidence="1">Carbohydrate degradation; glycolysis; D-glyceraldehyde 3-phosphate and glycerone phosphate from D-glucose: step 2/4.</text>
</comment>
<comment type="subcellular location">
    <subcellularLocation>
        <location evidence="1">Cytoplasm</location>
    </subcellularLocation>
</comment>
<comment type="similarity">
    <text evidence="1">Belongs to the GPI family.</text>
</comment>
<evidence type="ECO:0000255" key="1">
    <source>
        <dbReference type="HAMAP-Rule" id="MF_00473"/>
    </source>
</evidence>
<evidence type="ECO:0000256" key="2">
    <source>
        <dbReference type="SAM" id="MobiDB-lite"/>
    </source>
</evidence>
<protein>
    <recommendedName>
        <fullName evidence="1">Glucose-6-phosphate isomerase</fullName>
        <shortName evidence="1">GPI</shortName>
        <ecNumber evidence="1">5.3.1.9</ecNumber>
    </recommendedName>
    <alternativeName>
        <fullName evidence="1">Phosphoglucose isomerase</fullName>
        <shortName evidence="1">PGI</shortName>
    </alternativeName>
    <alternativeName>
        <fullName evidence="1">Phosphohexose isomerase</fullName>
        <shortName evidence="1">PHI</shortName>
    </alternativeName>
</protein>
<proteinExistence type="inferred from homology"/>
<keyword id="KW-0963">Cytoplasm</keyword>
<keyword id="KW-0312">Gluconeogenesis</keyword>
<keyword id="KW-0324">Glycolysis</keyword>
<keyword id="KW-0413">Isomerase</keyword>
<keyword id="KW-1185">Reference proteome</keyword>